<organism>
    <name type="scientific">Anthopleura elegantissima</name>
    <name type="common">Green aggregating anemone</name>
    <name type="synonym">Actinia elegantissima</name>
    <dbReference type="NCBI Taxonomy" id="6110"/>
    <lineage>
        <taxon>Eukaryota</taxon>
        <taxon>Metazoa</taxon>
        <taxon>Cnidaria</taxon>
        <taxon>Anthozoa</taxon>
        <taxon>Hexacorallia</taxon>
        <taxon>Actiniaria</taxon>
        <taxon>Actiniidae</taxon>
        <taxon>Anthopleura</taxon>
    </lineage>
</organism>
<accession>P61541</accession>
<dbReference type="PDB" id="1WQK">
    <property type="method" value="NMR"/>
    <property type="chains" value="A=1-42"/>
</dbReference>
<dbReference type="PDB" id="7BWI">
    <property type="method" value="NMR"/>
    <property type="chains" value="A=1-42"/>
</dbReference>
<dbReference type="PDBsum" id="1WQK"/>
<dbReference type="PDBsum" id="7BWI"/>
<dbReference type="SMR" id="P61541"/>
<dbReference type="TCDB" id="8.B.11.1.1">
    <property type="family name" value="the sea anemone peptide toxin (apetx) family"/>
</dbReference>
<dbReference type="EvolutionaryTrace" id="P61541"/>
<dbReference type="GO" id="GO:0005576">
    <property type="term" value="C:extracellular region"/>
    <property type="evidence" value="ECO:0007669"/>
    <property type="project" value="UniProtKB-SubCell"/>
</dbReference>
<dbReference type="GO" id="GO:0042151">
    <property type="term" value="C:nematocyst"/>
    <property type="evidence" value="ECO:0007669"/>
    <property type="project" value="UniProtKB-SubCell"/>
</dbReference>
<dbReference type="GO" id="GO:0008200">
    <property type="term" value="F:ion channel inhibitor activity"/>
    <property type="evidence" value="ECO:0007669"/>
    <property type="project" value="InterPro"/>
</dbReference>
<dbReference type="GO" id="GO:0015459">
    <property type="term" value="F:potassium channel regulator activity"/>
    <property type="evidence" value="ECO:0007669"/>
    <property type="project" value="UniProtKB-KW"/>
</dbReference>
<dbReference type="GO" id="GO:0017080">
    <property type="term" value="F:sodium channel regulator activity"/>
    <property type="evidence" value="ECO:0007669"/>
    <property type="project" value="UniProtKB-KW"/>
</dbReference>
<dbReference type="GO" id="GO:0090729">
    <property type="term" value="F:toxin activity"/>
    <property type="evidence" value="ECO:0007669"/>
    <property type="project" value="UniProtKB-KW"/>
</dbReference>
<dbReference type="GO" id="GO:0042742">
    <property type="term" value="P:defense response to bacterium"/>
    <property type="evidence" value="ECO:0007669"/>
    <property type="project" value="UniProtKB-KW"/>
</dbReference>
<dbReference type="Gene3D" id="2.20.20.10">
    <property type="entry name" value="Anthopleurin-A"/>
    <property type="match status" value="1"/>
</dbReference>
<dbReference type="InterPro" id="IPR012414">
    <property type="entry name" value="BDS_K_chnl_tox"/>
</dbReference>
<dbReference type="InterPro" id="IPR023355">
    <property type="entry name" value="Myo_ane_neurotoxin_sf"/>
</dbReference>
<dbReference type="Pfam" id="PF07936">
    <property type="entry name" value="Defensin_4"/>
    <property type="match status" value="1"/>
</dbReference>
<dbReference type="SUPFAM" id="SSF57392">
    <property type="entry name" value="Defensin-like"/>
    <property type="match status" value="1"/>
</dbReference>
<sequence length="42" mass="4558">GTTCYCGKTIGIYWFGTKTCPSNRGYTGSCGYFLGICCYPVD</sequence>
<keyword id="KW-0002">3D-structure</keyword>
<keyword id="KW-0044">Antibiotic</keyword>
<keyword id="KW-0929">Antimicrobial</keyword>
<keyword id="KW-0903">Direct protein sequencing</keyword>
<keyword id="KW-1015">Disulfide bond</keyword>
<keyword id="KW-0872">Ion channel impairing toxin</keyword>
<keyword id="KW-0166">Nematocyst</keyword>
<keyword id="KW-0528">Neurotoxin</keyword>
<keyword id="KW-0632">Potassium channel impairing toxin</keyword>
<keyword id="KW-0964">Secreted</keyword>
<keyword id="KW-0800">Toxin</keyword>
<keyword id="KW-1220">Voltage-gated potassium channel impairing toxin</keyword>
<keyword id="KW-0738">Voltage-gated sodium channel impairing toxin</keyword>
<proteinExistence type="evidence at protein level"/>
<name>BDS1_ANTEL</name>
<evidence type="ECO:0000269" key="1">
    <source>
    </source>
</evidence>
<evidence type="ECO:0000269" key="2">
    <source>
    </source>
</evidence>
<evidence type="ECO:0000269" key="3">
    <source>
    </source>
</evidence>
<evidence type="ECO:0000269" key="4">
    <source>
    </source>
</evidence>
<evidence type="ECO:0000269" key="5">
    <source>
    </source>
</evidence>
<evidence type="ECO:0000303" key="6">
    <source>
    </source>
</evidence>
<evidence type="ECO:0000303" key="7">
    <source>
    </source>
</evidence>
<evidence type="ECO:0000305" key="8"/>
<evidence type="ECO:0000312" key="9">
    <source>
        <dbReference type="PDB" id="1WQK"/>
    </source>
</evidence>
<evidence type="ECO:0007829" key="10">
    <source>
        <dbReference type="PDB" id="1WQK"/>
    </source>
</evidence>
<evidence type="ECO:0007829" key="11">
    <source>
        <dbReference type="PDB" id="7BWI"/>
    </source>
</evidence>
<feature type="chain" id="PRO_0000221539" description="Kappa-actitoxin-Ael2a" evidence="1">
    <location>
        <begin position="1"/>
        <end position="42"/>
    </location>
</feature>
<feature type="disulfide bond" evidence="2 9">
    <location>
        <begin position="4"/>
        <end position="37"/>
    </location>
</feature>
<feature type="disulfide bond" evidence="2 9">
    <location>
        <begin position="6"/>
        <end position="30"/>
    </location>
</feature>
<feature type="disulfide bond" evidence="2 9">
    <location>
        <begin position="20"/>
        <end position="38"/>
    </location>
</feature>
<feature type="strand" evidence="10">
    <location>
        <begin position="3"/>
        <end position="6"/>
    </location>
</feature>
<feature type="strand" evidence="10">
    <location>
        <begin position="9"/>
        <end position="16"/>
    </location>
</feature>
<feature type="helix" evidence="11">
    <location>
        <begin position="22"/>
        <end position="24"/>
    </location>
</feature>
<feature type="strand" evidence="10">
    <location>
        <begin position="28"/>
        <end position="32"/>
    </location>
</feature>
<feature type="strand" evidence="10">
    <location>
        <begin position="35"/>
        <end position="40"/>
    </location>
</feature>
<protein>
    <recommendedName>
        <fullName evidence="7">Kappa-actitoxin-Ael2a</fullName>
        <shortName evidence="7">Kappa-AITX-Ael2a</shortName>
    </recommendedName>
    <alternativeName>
        <fullName evidence="6">Toxin APETx1</fullName>
    </alternativeName>
</protein>
<comment type="function">
    <text evidence="1 3 4 5">Peptide with both antimicrobial and neurotoxin activities. This toxin acts both on ERG potassium channels and sodium channels (PubMed:12815161, PubMed:16497878, PubMed:17473056, PubMed:22972919). It potently and reversibly inhibits human Kv11.1/KCNH2/ERG1 (IC(50)=34 nM) (PubMed:12815161, PubMed:16497878, PubMed:17473056), rat Kv11.1/KCNH2/ERG1 (PubMed:16497878) and Kv11.3/KCNH7/ERG3 (PubMed:17473056) voltage-gated potassium channels in a similar potency. It acts as a gating-modifier toxin that shifts the voltage-dependence of ERG activation in the positive direction and suppresses its current amplitudes elicited by strong depolarizing pulses (PubMed:12815161, PubMed:17473056). On sodium channels, it blocks Nav1.2/SCN2A (EC(50)=31 nM), Nav1.3/SCN3A, Nav1.4/SCN4A, Nav1.5/SCN5A, Nav1.6/SCN8A, Nav1.8/SCN10A (EC(50)=92 nM) (PubMed:22972919). It may act by binding at site 1 or close by, only when the pore is in an open configuration (PubMed:22972919). Shows antibacterial activity against the Gram-negative bacterium S.typhimurium, but not on the bacteria B.subtilis, S.aureus, and P.aeruginosa (PubMed:28796463). In vivo, this toxin does not induce neurotoxic symptoms when injected into mice (PubMed:12815161).</text>
</comment>
<comment type="subcellular location">
    <subcellularLocation>
        <location evidence="1 5">Secreted</location>
    </subcellularLocation>
    <subcellularLocation>
        <location evidence="8">Nematocyst</location>
    </subcellularLocation>
</comment>
<comment type="domain">
    <text evidence="2">Has the CSbeta/beta fold, which comprises anti-parallel beta-sheets stabilized by three or four disulfide bonds.</text>
</comment>
<comment type="mass spectrometry" mass="4552.21" method="Electrospray" evidence="1"/>
<comment type="miscellaneous">
    <text evidence="1 4 5">Negative results: does not block Kv11.2/KCNH6/ERG2 (PubMed:17473056), Kv1.1/KCNA1, Kv1.2/KCNA2, Kv1.3/KCNA3, Kv1.5/KCNA5, Kv1.6/KCNA6, Kv2.1/KCNB1, Kv3.4/KCNC4, Kv4.2/KCND2, Kv7.1/KCNQ1, Kv7.2/KCNQ2, Kv7.3/KCNQ3, Kv10.1/EAG1/KCNH1 and Kv12.3/ELK1/KCNH4 (PubMed:12815161). Weakly inhibits Kv1.4 KCNA4 (27%) (PubMed:12815161). Does not inhibit Nav1.7/SCN9A and insect DmNav1 and BgNav1 (PubMed:22972919).</text>
</comment>
<comment type="similarity">
    <text evidence="8">Belongs to the sea anemone type 3 (BDS) potassium channel toxin family.</text>
</comment>
<reference key="1">
    <citation type="journal article" date="2003" name="Mol. Pharmacol.">
        <title>APETx1, a new toxin from the sea anemone Anthopleura elegantissima, blocks voltage-gated human ether-a-go-go-related gene potassium channels.</title>
        <authorList>
            <person name="Diochot S."/>
            <person name="Loret E."/>
            <person name="Bruhn T."/>
            <person name="Beress L."/>
            <person name="Lazdunski M."/>
        </authorList>
    </citation>
    <scope>PROTEIN SEQUENCE</scope>
    <scope>FUNCTION</scope>
    <scope>MASS SPECTROMETRY</scope>
    <scope>DISULFIDE BONDS</scope>
    <scope>SUBCELLULAR LOCATION</scope>
    <scope>3D-STRUCTURE MODELING</scope>
</reference>
<reference key="2">
    <citation type="journal article" date="2006" name="Mol. Pharmacol.">
        <title>Species diversity and peptide toxins blocking selectivity of ether-a-go-go-related gene subfamily K+ channels in the central nervous system.</title>
        <authorList>
            <person name="Restano-Cassulini R."/>
            <person name="Korolkova Y.V."/>
            <person name="Diochot S."/>
            <person name="Gurrola G."/>
            <person name="Guasti L."/>
            <person name="Possani L.D."/>
            <person name="Lazdunski M."/>
            <person name="Grishin E.V."/>
            <person name="Arcangeli A."/>
            <person name="Wanke E."/>
        </authorList>
    </citation>
    <scope>FUNCTION</scope>
</reference>
<reference key="3">
    <citation type="journal article" date="2007" name="Mol. Pharmacol.">
        <title>APETx1 from sea anemone Anthopleura elegantissima is a gating modifier peptide toxin of the human ether-a-go-go- related potassium channel.</title>
        <authorList>
            <person name="Zhang M."/>
            <person name="Liu X.S."/>
            <person name="Diochot S."/>
            <person name="Lazdunski M."/>
            <person name="Tseng G.N."/>
        </authorList>
    </citation>
    <scope>FUNCTION</scope>
</reference>
<reference key="4">
    <citation type="journal article" date="2012" name="FASEB J.">
        <title>A natural point mutation changes both target selectivity and mechanism of action of sea anemone toxins.</title>
        <authorList>
            <person name="Peigneur S."/>
            <person name="Beress L."/>
            <person name="Moeller C."/>
            <person name="Mari F."/>
            <person name="Forssmann W.G."/>
            <person name="Tytgat J."/>
        </authorList>
    </citation>
    <scope>FUNCTION</scope>
    <scope>SUBCELLULAR LOCATION</scope>
</reference>
<reference key="5">
    <citation type="journal article" date="2012" name="Toxicon">
        <title>Development of a rational nomenclature for naming peptide and protein toxins from sea anemones.</title>
        <authorList>
            <person name="Oliveira J.S."/>
            <person name="Fuentes-Silva D."/>
            <person name="King G.F."/>
        </authorList>
    </citation>
    <scope>NOMENCLATURE</scope>
</reference>
<reference key="6">
    <citation type="journal article" date="2017" name="FEBS J.">
        <title>Defensin-neurotoxin dyad in a basally branching metazoan sea anemone.</title>
        <authorList>
            <person name="Kim C.H."/>
            <person name="Lee Y.J."/>
            <person name="Go H.J."/>
            <person name="Oh H.Y."/>
            <person name="Lee T.K."/>
            <person name="Park J.B."/>
            <person name="Park N.G."/>
        </authorList>
    </citation>
    <scope>FUNCTION AS ANTIBIOTIC</scope>
</reference>
<reference key="7">
    <citation type="journal article" date="2005" name="Proteins">
        <title>Solution structure of APETx1 from the sea anemone Anthopleura elegantissima: a new fold for an HERG toxin.</title>
        <authorList>
            <person name="Chagot B."/>
            <person name="Diochot S."/>
            <person name="Pimentel C."/>
            <person name="Lazdunski M."/>
            <person name="Darbon H."/>
        </authorList>
    </citation>
    <scope>STRUCTURE BY NMR</scope>
    <scope>DISULFIDE BONDS</scope>
</reference>